<gene>
    <name type="primary">yhhW</name>
    <name type="ordered locus">Z4807</name>
    <name type="ordered locus">ECs4288</name>
</gene>
<keyword id="KW-0186">Copper</keyword>
<keyword id="KW-0223">Dioxygenase</keyword>
<keyword id="KW-0408">Iron</keyword>
<keyword id="KW-0479">Metal-binding</keyword>
<keyword id="KW-0560">Oxidoreductase</keyword>
<keyword id="KW-1185">Reference proteome</keyword>
<keyword id="KW-0862">Zinc</keyword>
<dbReference type="EC" id="1.13.11.24"/>
<dbReference type="EMBL" id="AE005174">
    <property type="protein sequence ID" value="AAG58548.1"/>
    <property type="molecule type" value="Genomic_DNA"/>
</dbReference>
<dbReference type="EMBL" id="BA000007">
    <property type="protein sequence ID" value="BAB37711.1"/>
    <property type="molecule type" value="Genomic_DNA"/>
</dbReference>
<dbReference type="PIR" id="H86010">
    <property type="entry name" value="H86010"/>
</dbReference>
<dbReference type="PIR" id="H91164">
    <property type="entry name" value="H91164"/>
</dbReference>
<dbReference type="RefSeq" id="NP_312315.1">
    <property type="nucleotide sequence ID" value="NC_002695.1"/>
</dbReference>
<dbReference type="RefSeq" id="WP_000639806.1">
    <property type="nucleotide sequence ID" value="NZ_VOAI01000004.1"/>
</dbReference>
<dbReference type="SMR" id="P58116"/>
<dbReference type="STRING" id="155864.Z4807"/>
<dbReference type="GeneID" id="915854"/>
<dbReference type="KEGG" id="ece:Z4807"/>
<dbReference type="KEGG" id="ecs:ECs_4288"/>
<dbReference type="PATRIC" id="fig|386585.9.peg.4480"/>
<dbReference type="eggNOG" id="COG1741">
    <property type="taxonomic scope" value="Bacteria"/>
</dbReference>
<dbReference type="HOGENOM" id="CLU_064194_2_2_6"/>
<dbReference type="OMA" id="HQDAWFH"/>
<dbReference type="UniPathway" id="UPA00724"/>
<dbReference type="Proteomes" id="UP000000558">
    <property type="component" value="Chromosome"/>
</dbReference>
<dbReference type="Proteomes" id="UP000002519">
    <property type="component" value="Chromosome"/>
</dbReference>
<dbReference type="GO" id="GO:0046872">
    <property type="term" value="F:metal ion binding"/>
    <property type="evidence" value="ECO:0007669"/>
    <property type="project" value="UniProtKB-KW"/>
</dbReference>
<dbReference type="GO" id="GO:0008127">
    <property type="term" value="F:quercetin 2,3-dioxygenase activity"/>
    <property type="evidence" value="ECO:0007669"/>
    <property type="project" value="UniProtKB-EC"/>
</dbReference>
<dbReference type="CDD" id="cd20311">
    <property type="entry name" value="cupin_Yhhw_C"/>
    <property type="match status" value="1"/>
</dbReference>
<dbReference type="CDD" id="cd02910">
    <property type="entry name" value="cupin_Yhhw_N"/>
    <property type="match status" value="1"/>
</dbReference>
<dbReference type="FunFam" id="2.60.120.10:FF:000028">
    <property type="entry name" value="Pirin family protein"/>
    <property type="match status" value="1"/>
</dbReference>
<dbReference type="FunFam" id="2.60.120.10:FF:000021">
    <property type="entry name" value="Quercetin 2,3-dioxygenase"/>
    <property type="match status" value="1"/>
</dbReference>
<dbReference type="Gene3D" id="2.60.120.10">
    <property type="entry name" value="Jelly Rolls"/>
    <property type="match status" value="2"/>
</dbReference>
<dbReference type="InterPro" id="IPR012093">
    <property type="entry name" value="Pirin"/>
</dbReference>
<dbReference type="InterPro" id="IPR003829">
    <property type="entry name" value="Pirin_N_dom"/>
</dbReference>
<dbReference type="InterPro" id="IPR041602">
    <property type="entry name" value="Quercetinase_C"/>
</dbReference>
<dbReference type="InterPro" id="IPR014710">
    <property type="entry name" value="RmlC-like_jellyroll"/>
</dbReference>
<dbReference type="InterPro" id="IPR011051">
    <property type="entry name" value="RmlC_Cupin_sf"/>
</dbReference>
<dbReference type="PANTHER" id="PTHR43212">
    <property type="entry name" value="QUERCETIN 2,3-DIOXYGENASE"/>
    <property type="match status" value="1"/>
</dbReference>
<dbReference type="PANTHER" id="PTHR43212:SF3">
    <property type="entry name" value="QUERCETIN 2,3-DIOXYGENASE"/>
    <property type="match status" value="1"/>
</dbReference>
<dbReference type="Pfam" id="PF02678">
    <property type="entry name" value="Pirin"/>
    <property type="match status" value="1"/>
</dbReference>
<dbReference type="Pfam" id="PF17954">
    <property type="entry name" value="Pirin_C_2"/>
    <property type="match status" value="1"/>
</dbReference>
<dbReference type="PIRSF" id="PIRSF006232">
    <property type="entry name" value="Pirin"/>
    <property type="match status" value="1"/>
</dbReference>
<dbReference type="SUPFAM" id="SSF51182">
    <property type="entry name" value="RmlC-like cupins"/>
    <property type="match status" value="1"/>
</dbReference>
<organism>
    <name type="scientific">Escherichia coli O157:H7</name>
    <dbReference type="NCBI Taxonomy" id="83334"/>
    <lineage>
        <taxon>Bacteria</taxon>
        <taxon>Pseudomonadati</taxon>
        <taxon>Pseudomonadota</taxon>
        <taxon>Gammaproteobacteria</taxon>
        <taxon>Enterobacterales</taxon>
        <taxon>Enterobacteriaceae</taxon>
        <taxon>Escherichia</taxon>
    </lineage>
</organism>
<sequence length="231" mass="26291">MIYLRKANERGHANHGWLDSWHTFSFANYYDPNFMGFSALRVINDDVIEAGQGFGTHPHKDMEILTYVLEGTVEHQDSMGNKEQVPAGEFQIMSAGTGIRHSEYNPSSTERLHLYQIWIMPEENGITPRYEQRRFDAVQGKQLVLSPDARDGSLKVHQDMELYRWALLKDEQSVHQIAAERRVWIQVVKGNVTINGVKASISDGLAIWDEQAISIHADSDSEVLLFDLPPV</sequence>
<protein>
    <recommendedName>
        <fullName>Quercetin 2,3-dioxygenase</fullName>
        <shortName>Quercetinase</shortName>
        <ecNumber>1.13.11.24</ecNumber>
    </recommendedName>
    <alternativeName>
        <fullName>Pirin-like protein YhhW</fullName>
    </alternativeName>
</protein>
<accession>P58116</accession>
<name>YHHW_ECO57</name>
<proteinExistence type="inferred from homology"/>
<evidence type="ECO:0000250" key="1"/>
<evidence type="ECO:0000305" key="2"/>
<feature type="chain" id="PRO_0000214064" description="Quercetin 2,3-dioxygenase">
    <location>
        <begin position="1"/>
        <end position="231"/>
    </location>
</feature>
<feature type="binding site" evidence="1">
    <location>
        <position position="57"/>
    </location>
    <ligand>
        <name>a divalent metal cation</name>
        <dbReference type="ChEBI" id="CHEBI:60240"/>
    </ligand>
</feature>
<feature type="binding site" evidence="1">
    <location>
        <position position="59"/>
    </location>
    <ligand>
        <name>a divalent metal cation</name>
        <dbReference type="ChEBI" id="CHEBI:60240"/>
    </ligand>
</feature>
<feature type="binding site" evidence="1">
    <location>
        <position position="101"/>
    </location>
    <ligand>
        <name>a divalent metal cation</name>
        <dbReference type="ChEBI" id="CHEBI:60240"/>
    </ligand>
</feature>
<feature type="binding site" evidence="1">
    <location>
        <position position="103"/>
    </location>
    <ligand>
        <name>a divalent metal cation</name>
        <dbReference type="ChEBI" id="CHEBI:60240"/>
    </ligand>
</feature>
<comment type="function">
    <text evidence="1">Has quercetin 2,3-dioxygenase activity in vitro. Its physiological role is unknown; however, may provide a mechanism that would avoid inhibition of key cellular proteins, such as DNA gyrase, by quercetin (By similarity).</text>
</comment>
<comment type="catalytic activity">
    <reaction>
        <text>quercetin + O2 = 2-(3,4-dihydroxybenzoyloxy)-4,6-dihydroxybenzoate + CO</text>
        <dbReference type="Rhea" id="RHEA:15381"/>
        <dbReference type="ChEBI" id="CHEBI:15379"/>
        <dbReference type="ChEBI" id="CHEBI:17245"/>
        <dbReference type="ChEBI" id="CHEBI:57628"/>
        <dbReference type="ChEBI" id="CHEBI:57694"/>
        <dbReference type="EC" id="1.13.11.24"/>
    </reaction>
</comment>
<comment type="cofactor">
    <cofactor evidence="1">
        <name>Zn(2+)</name>
        <dbReference type="ChEBI" id="CHEBI:29105"/>
    </cofactor>
    <cofactor evidence="1">
        <name>Co(2+)</name>
        <dbReference type="ChEBI" id="CHEBI:48828"/>
    </cofactor>
    <cofactor evidence="1">
        <name>Fe(2+)</name>
        <dbReference type="ChEBI" id="CHEBI:29033"/>
    </cofactor>
    <text evidence="1">Binds 1 divalent metal cation, Zn(2+), Co(2+) or Fe(2+).</text>
</comment>
<comment type="pathway">
    <text>Flavonoid metabolism; quercetin degradation.</text>
</comment>
<comment type="domain">
    <text evidence="1">Is composed of two structurally similar domains arranged face to face.</text>
</comment>
<comment type="miscellaneous">
    <text>Quercetin is a flavonoid compound synthesized by a variety of plants, including foods for human consumption.</text>
</comment>
<comment type="similarity">
    <text evidence="2">Belongs to the pirin family.</text>
</comment>
<reference key="1">
    <citation type="journal article" date="2001" name="Nature">
        <title>Genome sequence of enterohaemorrhagic Escherichia coli O157:H7.</title>
        <authorList>
            <person name="Perna N.T."/>
            <person name="Plunkett G. III"/>
            <person name="Burland V."/>
            <person name="Mau B."/>
            <person name="Glasner J.D."/>
            <person name="Rose D.J."/>
            <person name="Mayhew G.F."/>
            <person name="Evans P.S."/>
            <person name="Gregor J."/>
            <person name="Kirkpatrick H.A."/>
            <person name="Posfai G."/>
            <person name="Hackett J."/>
            <person name="Klink S."/>
            <person name="Boutin A."/>
            <person name="Shao Y."/>
            <person name="Miller L."/>
            <person name="Grotbeck E.J."/>
            <person name="Davis N.W."/>
            <person name="Lim A."/>
            <person name="Dimalanta E.T."/>
            <person name="Potamousis K."/>
            <person name="Apodaca J."/>
            <person name="Anantharaman T.S."/>
            <person name="Lin J."/>
            <person name="Yen G."/>
            <person name="Schwartz D.C."/>
            <person name="Welch R.A."/>
            <person name="Blattner F.R."/>
        </authorList>
    </citation>
    <scope>NUCLEOTIDE SEQUENCE [LARGE SCALE GENOMIC DNA]</scope>
    <source>
        <strain>O157:H7 / EDL933 / ATCC 700927 / EHEC</strain>
    </source>
</reference>
<reference key="2">
    <citation type="journal article" date="2001" name="DNA Res.">
        <title>Complete genome sequence of enterohemorrhagic Escherichia coli O157:H7 and genomic comparison with a laboratory strain K-12.</title>
        <authorList>
            <person name="Hayashi T."/>
            <person name="Makino K."/>
            <person name="Ohnishi M."/>
            <person name="Kurokawa K."/>
            <person name="Ishii K."/>
            <person name="Yokoyama K."/>
            <person name="Han C.-G."/>
            <person name="Ohtsubo E."/>
            <person name="Nakayama K."/>
            <person name="Murata T."/>
            <person name="Tanaka M."/>
            <person name="Tobe T."/>
            <person name="Iida T."/>
            <person name="Takami H."/>
            <person name="Honda T."/>
            <person name="Sasakawa C."/>
            <person name="Ogasawara N."/>
            <person name="Yasunaga T."/>
            <person name="Kuhara S."/>
            <person name="Shiba T."/>
            <person name="Hattori M."/>
            <person name="Shinagawa H."/>
        </authorList>
    </citation>
    <scope>NUCLEOTIDE SEQUENCE [LARGE SCALE GENOMIC DNA]</scope>
    <source>
        <strain>O157:H7 / Sakai / RIMD 0509952 / EHEC</strain>
    </source>
</reference>